<gene>
    <name type="ordered locus">aq_1256</name>
</gene>
<accession>O67297</accession>
<feature type="chain" id="PRO_0000186914" description="Uncharacterized protein aq_1256">
    <location>
        <begin position="1"/>
        <end position="309"/>
    </location>
</feature>
<organism>
    <name type="scientific">Aquifex aeolicus (strain VF5)</name>
    <dbReference type="NCBI Taxonomy" id="224324"/>
    <lineage>
        <taxon>Bacteria</taxon>
        <taxon>Pseudomonadati</taxon>
        <taxon>Aquificota</taxon>
        <taxon>Aquificia</taxon>
        <taxon>Aquificales</taxon>
        <taxon>Aquificaceae</taxon>
        <taxon>Aquifex</taxon>
    </lineage>
</organism>
<sequence>MDFSTPVLKHVEKHIQHRIHFMNTTVYQSSRYKGGAYTTSHLIFNPKIGKFEILVNASVSFGNELNKTFEELGFNSLPSADDLEKDTKDVNETGRKYLLEAYAGLKVKRAGVYAGILDTTSFFDTNEYANDEQNQFLNTDLVNNPLAVLPSYNPGLILNLNLSHNFSLQFGWAQGDPDTESVYLMQFGFSSEDYHVYFYYTHSPFEEVKSLGISSDYTFENLGFFFRFGKNNLEDYKYFVSGGSVLNLGKEEIGFGYAFRKGNKLKDVNVLEIYFKHVLSSYLHITFDYQLIDDVRNTYVLGFRLNFEY</sequence>
<name>Y1256_AQUAE</name>
<evidence type="ECO:0000305" key="1"/>
<comment type="similarity">
    <text evidence="1">Belongs to the OprB family.</text>
</comment>
<proteinExistence type="inferred from homology"/>
<keyword id="KW-1185">Reference proteome</keyword>
<dbReference type="EMBL" id="AE000657">
    <property type="protein sequence ID" value="AAC07260.1"/>
    <property type="molecule type" value="Genomic_DNA"/>
</dbReference>
<dbReference type="PIR" id="F70408">
    <property type="entry name" value="F70408"/>
</dbReference>
<dbReference type="RefSeq" id="NP_213861.1">
    <property type="nucleotide sequence ID" value="NC_000918.1"/>
</dbReference>
<dbReference type="RefSeq" id="WP_010880799.1">
    <property type="nucleotide sequence ID" value="NC_000918.1"/>
</dbReference>
<dbReference type="SMR" id="O67297"/>
<dbReference type="STRING" id="224324.aq_1256"/>
<dbReference type="EnsemblBacteria" id="AAC07260">
    <property type="protein sequence ID" value="AAC07260"/>
    <property type="gene ID" value="aq_1256"/>
</dbReference>
<dbReference type="KEGG" id="aae:aq_1256"/>
<dbReference type="eggNOG" id="COG3659">
    <property type="taxonomic scope" value="Bacteria"/>
</dbReference>
<dbReference type="HOGENOM" id="CLU_823503_0_0_0"/>
<dbReference type="InParanoid" id="O67297"/>
<dbReference type="OrthoDB" id="5755240at2"/>
<dbReference type="Proteomes" id="UP000000798">
    <property type="component" value="Chromosome"/>
</dbReference>
<dbReference type="Gene3D" id="2.40.160.180">
    <property type="entry name" value="Carbohydrate-selective porin OprB"/>
    <property type="match status" value="1"/>
</dbReference>
<dbReference type="InterPro" id="IPR038673">
    <property type="entry name" value="OprB_sf"/>
</dbReference>
<protein>
    <recommendedName>
        <fullName>Uncharacterized protein aq_1256</fullName>
    </recommendedName>
</protein>
<reference key="1">
    <citation type="journal article" date="1998" name="Nature">
        <title>The complete genome of the hyperthermophilic bacterium Aquifex aeolicus.</title>
        <authorList>
            <person name="Deckert G."/>
            <person name="Warren P.V."/>
            <person name="Gaasterland T."/>
            <person name="Young W.G."/>
            <person name="Lenox A.L."/>
            <person name="Graham D.E."/>
            <person name="Overbeek R."/>
            <person name="Snead M.A."/>
            <person name="Keller M."/>
            <person name="Aujay M."/>
            <person name="Huber R."/>
            <person name="Feldman R.A."/>
            <person name="Short J.M."/>
            <person name="Olsen G.J."/>
            <person name="Swanson R.V."/>
        </authorList>
    </citation>
    <scope>NUCLEOTIDE SEQUENCE [LARGE SCALE GENOMIC DNA]</scope>
    <source>
        <strain>VF5</strain>
    </source>
</reference>